<feature type="chain" id="PRO_1000094470" description="3-dehydroquinate synthase">
    <location>
        <begin position="1"/>
        <end position="359"/>
    </location>
</feature>
<feature type="binding site" evidence="1">
    <location>
        <begin position="71"/>
        <end position="76"/>
    </location>
    <ligand>
        <name>NAD(+)</name>
        <dbReference type="ChEBI" id="CHEBI:57540"/>
    </ligand>
</feature>
<feature type="binding site" evidence="1">
    <location>
        <begin position="105"/>
        <end position="109"/>
    </location>
    <ligand>
        <name>NAD(+)</name>
        <dbReference type="ChEBI" id="CHEBI:57540"/>
    </ligand>
</feature>
<feature type="binding site" evidence="1">
    <location>
        <begin position="129"/>
        <end position="130"/>
    </location>
    <ligand>
        <name>NAD(+)</name>
        <dbReference type="ChEBI" id="CHEBI:57540"/>
    </ligand>
</feature>
<feature type="binding site" evidence="1">
    <location>
        <position position="142"/>
    </location>
    <ligand>
        <name>NAD(+)</name>
        <dbReference type="ChEBI" id="CHEBI:57540"/>
    </ligand>
</feature>
<feature type="binding site" evidence="1">
    <location>
        <position position="151"/>
    </location>
    <ligand>
        <name>NAD(+)</name>
        <dbReference type="ChEBI" id="CHEBI:57540"/>
    </ligand>
</feature>
<feature type="binding site" evidence="1">
    <location>
        <position position="184"/>
    </location>
    <ligand>
        <name>Zn(2+)</name>
        <dbReference type="ChEBI" id="CHEBI:29105"/>
    </ligand>
</feature>
<feature type="binding site" evidence="1">
    <location>
        <position position="247"/>
    </location>
    <ligand>
        <name>Zn(2+)</name>
        <dbReference type="ChEBI" id="CHEBI:29105"/>
    </ligand>
</feature>
<feature type="binding site" evidence="1">
    <location>
        <position position="264"/>
    </location>
    <ligand>
        <name>Zn(2+)</name>
        <dbReference type="ChEBI" id="CHEBI:29105"/>
    </ligand>
</feature>
<evidence type="ECO:0000255" key="1">
    <source>
        <dbReference type="HAMAP-Rule" id="MF_00110"/>
    </source>
</evidence>
<proteinExistence type="inferred from homology"/>
<protein>
    <recommendedName>
        <fullName evidence="1">3-dehydroquinate synthase</fullName>
        <shortName evidence="1">DHQS</shortName>
        <ecNumber evidence="1">4.2.3.4</ecNumber>
    </recommendedName>
</protein>
<reference key="1">
    <citation type="submission" date="2008-02" db="EMBL/GenBank/DDBJ databases">
        <title>Complete sequence of chromosome 1 of Burkholderia cenocepacia MC0-3.</title>
        <authorList>
            <person name="Copeland A."/>
            <person name="Lucas S."/>
            <person name="Lapidus A."/>
            <person name="Barry K."/>
            <person name="Bruce D."/>
            <person name="Goodwin L."/>
            <person name="Glavina del Rio T."/>
            <person name="Dalin E."/>
            <person name="Tice H."/>
            <person name="Pitluck S."/>
            <person name="Chain P."/>
            <person name="Malfatti S."/>
            <person name="Shin M."/>
            <person name="Vergez L."/>
            <person name="Schmutz J."/>
            <person name="Larimer F."/>
            <person name="Land M."/>
            <person name="Hauser L."/>
            <person name="Kyrpides N."/>
            <person name="Mikhailova N."/>
            <person name="Tiedje J."/>
            <person name="Richardson P."/>
        </authorList>
    </citation>
    <scope>NUCLEOTIDE SEQUENCE [LARGE SCALE GENOMIC DNA]</scope>
    <source>
        <strain>MC0-3</strain>
    </source>
</reference>
<dbReference type="EC" id="4.2.3.4" evidence="1"/>
<dbReference type="EMBL" id="CP000958">
    <property type="protein sequence ID" value="ACA89552.1"/>
    <property type="molecule type" value="Genomic_DNA"/>
</dbReference>
<dbReference type="RefSeq" id="WP_012327763.1">
    <property type="nucleotide sequence ID" value="NC_010508.1"/>
</dbReference>
<dbReference type="SMR" id="B1JU67"/>
<dbReference type="GeneID" id="83047176"/>
<dbReference type="KEGG" id="bcm:Bcenmc03_0372"/>
<dbReference type="HOGENOM" id="CLU_001201_0_2_4"/>
<dbReference type="UniPathway" id="UPA00053">
    <property type="reaction ID" value="UER00085"/>
</dbReference>
<dbReference type="Proteomes" id="UP000002169">
    <property type="component" value="Chromosome 1"/>
</dbReference>
<dbReference type="GO" id="GO:0005737">
    <property type="term" value="C:cytoplasm"/>
    <property type="evidence" value="ECO:0007669"/>
    <property type="project" value="UniProtKB-SubCell"/>
</dbReference>
<dbReference type="GO" id="GO:0003856">
    <property type="term" value="F:3-dehydroquinate synthase activity"/>
    <property type="evidence" value="ECO:0007669"/>
    <property type="project" value="UniProtKB-UniRule"/>
</dbReference>
<dbReference type="GO" id="GO:0046872">
    <property type="term" value="F:metal ion binding"/>
    <property type="evidence" value="ECO:0007669"/>
    <property type="project" value="UniProtKB-KW"/>
</dbReference>
<dbReference type="GO" id="GO:0000166">
    <property type="term" value="F:nucleotide binding"/>
    <property type="evidence" value="ECO:0007669"/>
    <property type="project" value="UniProtKB-KW"/>
</dbReference>
<dbReference type="GO" id="GO:0008652">
    <property type="term" value="P:amino acid biosynthetic process"/>
    <property type="evidence" value="ECO:0007669"/>
    <property type="project" value="UniProtKB-KW"/>
</dbReference>
<dbReference type="GO" id="GO:0009073">
    <property type="term" value="P:aromatic amino acid family biosynthetic process"/>
    <property type="evidence" value="ECO:0007669"/>
    <property type="project" value="UniProtKB-KW"/>
</dbReference>
<dbReference type="GO" id="GO:0009423">
    <property type="term" value="P:chorismate biosynthetic process"/>
    <property type="evidence" value="ECO:0007669"/>
    <property type="project" value="UniProtKB-UniRule"/>
</dbReference>
<dbReference type="CDD" id="cd08195">
    <property type="entry name" value="DHQS"/>
    <property type="match status" value="1"/>
</dbReference>
<dbReference type="FunFam" id="3.40.50.1970:FF:000001">
    <property type="entry name" value="3-dehydroquinate synthase"/>
    <property type="match status" value="1"/>
</dbReference>
<dbReference type="Gene3D" id="3.40.50.1970">
    <property type="match status" value="1"/>
</dbReference>
<dbReference type="Gene3D" id="1.20.1090.10">
    <property type="entry name" value="Dehydroquinate synthase-like - alpha domain"/>
    <property type="match status" value="1"/>
</dbReference>
<dbReference type="HAMAP" id="MF_00110">
    <property type="entry name" value="DHQ_synthase"/>
    <property type="match status" value="1"/>
</dbReference>
<dbReference type="InterPro" id="IPR050071">
    <property type="entry name" value="Dehydroquinate_synthase"/>
</dbReference>
<dbReference type="InterPro" id="IPR016037">
    <property type="entry name" value="DHQ_synth_AroB"/>
</dbReference>
<dbReference type="InterPro" id="IPR030963">
    <property type="entry name" value="DHQ_synth_fam"/>
</dbReference>
<dbReference type="InterPro" id="IPR030960">
    <property type="entry name" value="DHQS/DOIS_N"/>
</dbReference>
<dbReference type="InterPro" id="IPR056179">
    <property type="entry name" value="DHQS_C"/>
</dbReference>
<dbReference type="NCBIfam" id="TIGR01357">
    <property type="entry name" value="aroB"/>
    <property type="match status" value="1"/>
</dbReference>
<dbReference type="PANTHER" id="PTHR43622">
    <property type="entry name" value="3-DEHYDROQUINATE SYNTHASE"/>
    <property type="match status" value="1"/>
</dbReference>
<dbReference type="PANTHER" id="PTHR43622:SF7">
    <property type="entry name" value="3-DEHYDROQUINATE SYNTHASE, CHLOROPLASTIC"/>
    <property type="match status" value="1"/>
</dbReference>
<dbReference type="Pfam" id="PF01761">
    <property type="entry name" value="DHQ_synthase"/>
    <property type="match status" value="1"/>
</dbReference>
<dbReference type="Pfam" id="PF24621">
    <property type="entry name" value="DHQS_C"/>
    <property type="match status" value="1"/>
</dbReference>
<dbReference type="PIRSF" id="PIRSF001455">
    <property type="entry name" value="DHQ_synth"/>
    <property type="match status" value="1"/>
</dbReference>
<dbReference type="SUPFAM" id="SSF56796">
    <property type="entry name" value="Dehydroquinate synthase-like"/>
    <property type="match status" value="1"/>
</dbReference>
<name>AROB_BURO0</name>
<keyword id="KW-0028">Amino-acid biosynthesis</keyword>
<keyword id="KW-0057">Aromatic amino acid biosynthesis</keyword>
<keyword id="KW-0170">Cobalt</keyword>
<keyword id="KW-0963">Cytoplasm</keyword>
<keyword id="KW-0456">Lyase</keyword>
<keyword id="KW-0479">Metal-binding</keyword>
<keyword id="KW-0520">NAD</keyword>
<keyword id="KW-0547">Nucleotide-binding</keyword>
<keyword id="KW-0862">Zinc</keyword>
<accession>B1JU67</accession>
<sequence>MITVNVDLGDRAYPIHIGAGLIGRTELFAPHIKGSSVTIVTNTTVDPLYGDALRAALAPLGKRVSTVVLPDGEAYKNWETLNLIFDGLLTDHADRKTTLVALGGGVVGDMTGFAAACYMRGVPFIQVPTTLLSQVDSSVGGKTGINHPLGKNMIGAFYQPQAVIADIGALTTLPDRELAAGVAEVIKTGAIADAGFFDWIEANVEALNRREPAALAHAVKRSCEIKASVVAADEREGGLRAILNFGHTFGHAIEAGLGYGEWLHGEAVGCGMVMAGDLSVRLGLLDEASRQRLDAVIAAAHLPTRGPALGDARYMDLMRVDKKAEAGAIKFVLLKRFGDTLITQAPDEAVFATLAQTTR</sequence>
<comment type="function">
    <text evidence="1">Catalyzes the conversion of 3-deoxy-D-arabino-heptulosonate 7-phosphate (DAHP) to dehydroquinate (DHQ).</text>
</comment>
<comment type="catalytic activity">
    <reaction evidence="1">
        <text>7-phospho-2-dehydro-3-deoxy-D-arabino-heptonate = 3-dehydroquinate + phosphate</text>
        <dbReference type="Rhea" id="RHEA:21968"/>
        <dbReference type="ChEBI" id="CHEBI:32364"/>
        <dbReference type="ChEBI" id="CHEBI:43474"/>
        <dbReference type="ChEBI" id="CHEBI:58394"/>
        <dbReference type="EC" id="4.2.3.4"/>
    </reaction>
</comment>
<comment type="cofactor">
    <cofactor evidence="1">
        <name>Co(2+)</name>
        <dbReference type="ChEBI" id="CHEBI:48828"/>
    </cofactor>
    <cofactor evidence="1">
        <name>Zn(2+)</name>
        <dbReference type="ChEBI" id="CHEBI:29105"/>
    </cofactor>
    <text evidence="1">Binds 1 divalent metal cation per subunit. Can use either Co(2+) or Zn(2+).</text>
</comment>
<comment type="cofactor">
    <cofactor evidence="1">
        <name>NAD(+)</name>
        <dbReference type="ChEBI" id="CHEBI:57540"/>
    </cofactor>
</comment>
<comment type="pathway">
    <text evidence="1">Metabolic intermediate biosynthesis; chorismate biosynthesis; chorismate from D-erythrose 4-phosphate and phosphoenolpyruvate: step 2/7.</text>
</comment>
<comment type="subcellular location">
    <subcellularLocation>
        <location evidence="1">Cytoplasm</location>
    </subcellularLocation>
</comment>
<comment type="similarity">
    <text evidence="1">Belongs to the sugar phosphate cyclases superfamily. Dehydroquinate synthase family.</text>
</comment>
<organism>
    <name type="scientific">Burkholderia orbicola (strain MC0-3)</name>
    <dbReference type="NCBI Taxonomy" id="406425"/>
    <lineage>
        <taxon>Bacteria</taxon>
        <taxon>Pseudomonadati</taxon>
        <taxon>Pseudomonadota</taxon>
        <taxon>Betaproteobacteria</taxon>
        <taxon>Burkholderiales</taxon>
        <taxon>Burkholderiaceae</taxon>
        <taxon>Burkholderia</taxon>
        <taxon>Burkholderia cepacia complex</taxon>
        <taxon>Burkholderia orbicola</taxon>
    </lineage>
</organism>
<gene>
    <name evidence="1" type="primary">aroB</name>
    <name type="ordered locus">Bcenmc03_0372</name>
</gene>